<feature type="signal peptide" evidence="1">
    <location>
        <begin position="1"/>
        <end position="19"/>
    </location>
</feature>
<feature type="chain" id="PRO_5000200958" description="Penicillin-insensitive murein endopeptidase">
    <location>
        <begin position="20"/>
        <end position="275"/>
    </location>
</feature>
<feature type="region of interest" description="Disordered" evidence="2">
    <location>
        <begin position="234"/>
        <end position="262"/>
    </location>
</feature>
<feature type="binding site" evidence="1">
    <location>
        <position position="110"/>
    </location>
    <ligand>
        <name>Zn(2+)</name>
        <dbReference type="ChEBI" id="CHEBI:29105"/>
        <label>1</label>
    </ligand>
</feature>
<feature type="binding site" evidence="1">
    <location>
        <position position="113"/>
    </location>
    <ligand>
        <name>Zn(2+)</name>
        <dbReference type="ChEBI" id="CHEBI:29105"/>
        <label>1</label>
    </ligand>
</feature>
<feature type="binding site" evidence="1">
    <location>
        <position position="120"/>
    </location>
    <ligand>
        <name>Zn(2+)</name>
        <dbReference type="ChEBI" id="CHEBI:29105"/>
        <label>1</label>
    </ligand>
</feature>
<feature type="binding site" evidence="1">
    <location>
        <position position="147"/>
    </location>
    <ligand>
        <name>Zn(2+)</name>
        <dbReference type="ChEBI" id="CHEBI:29105"/>
        <label>2</label>
    </ligand>
</feature>
<feature type="binding site" evidence="1">
    <location>
        <position position="211"/>
    </location>
    <ligand>
        <name>Zn(2+)</name>
        <dbReference type="ChEBI" id="CHEBI:29105"/>
        <label>1</label>
    </ligand>
</feature>
<feature type="disulfide bond" evidence="1">
    <location>
        <begin position="44"/>
        <end position="264"/>
    </location>
</feature>
<feature type="disulfide bond" evidence="1">
    <location>
        <begin position="187"/>
        <end position="235"/>
    </location>
</feature>
<feature type="disulfide bond" evidence="1">
    <location>
        <begin position="216"/>
        <end position="223"/>
    </location>
</feature>
<keyword id="KW-1015">Disulfide bond</keyword>
<keyword id="KW-0378">Hydrolase</keyword>
<keyword id="KW-0479">Metal-binding</keyword>
<keyword id="KW-0482">Metalloprotease</keyword>
<keyword id="KW-0574">Periplasm</keyword>
<keyword id="KW-0645">Protease</keyword>
<keyword id="KW-0732">Signal</keyword>
<keyword id="KW-0862">Zinc</keyword>
<sequence length="275" mass="30233">MKKWIAGLLALIAISPVMAATPWQQITHPVAGSPQAIGGFANGCVIGAMPLPLESADYQVMRPDQRRYFGHPDLLNFIHRLSDKAQKNQLGTVLIGDMAMPAGGRFSSGHASHQSGLDVDIWLQLPKQRWSQQQLLKPQPIDLVAADGKRVVPALWQPQVENLIKLAANDNEVTRIFVNPAIKKQLCLDAGADRTWLHKVRPWFGHRAHMHVRLRCPADSLECLDQDTPPPGDGCGAELESWFQPHQPSAKPGKTLPPPLPPSCQALLDNHFAAE</sequence>
<name>MEPA_YERE8</name>
<accession>A1JK62</accession>
<reference key="1">
    <citation type="journal article" date="2006" name="PLoS Genet.">
        <title>The complete genome sequence and comparative genome analysis of the high pathogenicity Yersinia enterocolitica strain 8081.</title>
        <authorList>
            <person name="Thomson N.R."/>
            <person name="Howard S."/>
            <person name="Wren B.W."/>
            <person name="Holden M.T.G."/>
            <person name="Crossman L."/>
            <person name="Challis G.L."/>
            <person name="Churcher C."/>
            <person name="Mungall K."/>
            <person name="Brooks K."/>
            <person name="Chillingworth T."/>
            <person name="Feltwell T."/>
            <person name="Abdellah Z."/>
            <person name="Hauser H."/>
            <person name="Jagels K."/>
            <person name="Maddison M."/>
            <person name="Moule S."/>
            <person name="Sanders M."/>
            <person name="Whitehead S."/>
            <person name="Quail M.A."/>
            <person name="Dougan G."/>
            <person name="Parkhill J."/>
            <person name="Prentice M.B."/>
        </authorList>
    </citation>
    <scope>NUCLEOTIDE SEQUENCE [LARGE SCALE GENOMIC DNA]</scope>
    <source>
        <strain>NCTC 13174 / 8081</strain>
    </source>
</reference>
<dbReference type="EC" id="3.4.24.-" evidence="1"/>
<dbReference type="EMBL" id="AM286415">
    <property type="protein sequence ID" value="CAL11374.1"/>
    <property type="molecule type" value="Genomic_DNA"/>
</dbReference>
<dbReference type="RefSeq" id="WP_005171929.1">
    <property type="nucleotide sequence ID" value="NC_008800.1"/>
</dbReference>
<dbReference type="RefSeq" id="YP_001005603.1">
    <property type="nucleotide sequence ID" value="NC_008800.1"/>
</dbReference>
<dbReference type="SMR" id="A1JK62"/>
<dbReference type="MEROPS" id="M74.001"/>
<dbReference type="KEGG" id="yen:YE1282"/>
<dbReference type="PATRIC" id="fig|393305.7.peg.1392"/>
<dbReference type="eggNOG" id="COG3770">
    <property type="taxonomic scope" value="Bacteria"/>
</dbReference>
<dbReference type="HOGENOM" id="CLU_052496_0_0_6"/>
<dbReference type="OrthoDB" id="1467367at2"/>
<dbReference type="Proteomes" id="UP000000642">
    <property type="component" value="Chromosome"/>
</dbReference>
<dbReference type="GO" id="GO:0030288">
    <property type="term" value="C:outer membrane-bounded periplasmic space"/>
    <property type="evidence" value="ECO:0007669"/>
    <property type="project" value="InterPro"/>
</dbReference>
<dbReference type="GO" id="GO:0046872">
    <property type="term" value="F:metal ion binding"/>
    <property type="evidence" value="ECO:0007669"/>
    <property type="project" value="UniProtKB-KW"/>
</dbReference>
<dbReference type="GO" id="GO:0004222">
    <property type="term" value="F:metalloendopeptidase activity"/>
    <property type="evidence" value="ECO:0007669"/>
    <property type="project" value="UniProtKB-UniRule"/>
</dbReference>
<dbReference type="GO" id="GO:0004252">
    <property type="term" value="F:serine-type endopeptidase activity"/>
    <property type="evidence" value="ECO:0007669"/>
    <property type="project" value="InterPro"/>
</dbReference>
<dbReference type="GO" id="GO:0000270">
    <property type="term" value="P:peptidoglycan metabolic process"/>
    <property type="evidence" value="ECO:0007669"/>
    <property type="project" value="UniProtKB-UniRule"/>
</dbReference>
<dbReference type="GO" id="GO:0006508">
    <property type="term" value="P:proteolysis"/>
    <property type="evidence" value="ECO:0007669"/>
    <property type="project" value="UniProtKB-KW"/>
</dbReference>
<dbReference type="Gene3D" id="3.30.1380.10">
    <property type="match status" value="1"/>
</dbReference>
<dbReference type="HAMAP" id="MF_01623">
    <property type="entry name" value="MepA"/>
    <property type="match status" value="1"/>
</dbReference>
<dbReference type="InterPro" id="IPR009045">
    <property type="entry name" value="Hedgehog_sig/DD-Pept_Zn-bd_sf"/>
</dbReference>
<dbReference type="InterPro" id="IPR005073">
    <property type="entry name" value="Peptidase_M74"/>
</dbReference>
<dbReference type="NCBIfam" id="NF006947">
    <property type="entry name" value="PRK09429.1"/>
    <property type="match status" value="1"/>
</dbReference>
<dbReference type="Pfam" id="PF03411">
    <property type="entry name" value="Peptidase_M74"/>
    <property type="match status" value="1"/>
</dbReference>
<dbReference type="PIRSF" id="PIRSF018455">
    <property type="entry name" value="MepA"/>
    <property type="match status" value="1"/>
</dbReference>
<dbReference type="SUPFAM" id="SSF55166">
    <property type="entry name" value="Hedgehog/DD-peptidase"/>
    <property type="match status" value="1"/>
</dbReference>
<protein>
    <recommendedName>
        <fullName evidence="1">Penicillin-insensitive murein endopeptidase</fullName>
        <ecNumber evidence="1">3.4.24.-</ecNumber>
    </recommendedName>
    <alternativeName>
        <fullName evidence="1">D-alanyl-D-alanine-endopeptidase</fullName>
        <shortName evidence="1">DD-endopeptidase</shortName>
    </alternativeName>
</protein>
<proteinExistence type="inferred from homology"/>
<evidence type="ECO:0000255" key="1">
    <source>
        <dbReference type="HAMAP-Rule" id="MF_01623"/>
    </source>
</evidence>
<evidence type="ECO:0000256" key="2">
    <source>
        <dbReference type="SAM" id="MobiDB-lite"/>
    </source>
</evidence>
<organism>
    <name type="scientific">Yersinia enterocolitica serotype O:8 / biotype 1B (strain NCTC 13174 / 8081)</name>
    <dbReference type="NCBI Taxonomy" id="393305"/>
    <lineage>
        <taxon>Bacteria</taxon>
        <taxon>Pseudomonadati</taxon>
        <taxon>Pseudomonadota</taxon>
        <taxon>Gammaproteobacteria</taxon>
        <taxon>Enterobacterales</taxon>
        <taxon>Yersiniaceae</taxon>
        <taxon>Yersinia</taxon>
    </lineage>
</organism>
<gene>
    <name evidence="1" type="primary">mepA</name>
    <name type="ordered locus">YE1282</name>
</gene>
<comment type="function">
    <text evidence="1">Murein endopeptidase that cleaves the D-alanyl-meso-2,6-diamino-pimelyl amide bond that connects peptidoglycan strands. Likely plays a role in the removal of murein from the sacculus.</text>
</comment>
<comment type="cofactor">
    <cofactor evidence="1">
        <name>Zn(2+)</name>
        <dbReference type="ChEBI" id="CHEBI:29105"/>
    </cofactor>
    <text evidence="1">Binds 2 Zn(2+) ions per subunit. Zn(2+) ion 1 is bound in the active site. Zn(2+) ion 2 is bound at the dimer interface by residues from both subunits.</text>
</comment>
<comment type="subunit">
    <text evidence="1">Dimer.</text>
</comment>
<comment type="subcellular location">
    <subcellularLocation>
        <location evidence="1">Periplasm</location>
    </subcellularLocation>
</comment>
<comment type="similarity">
    <text evidence="1">Belongs to the peptidase M74 family.</text>
</comment>